<organismHost>
    <name type="scientific">Sigmodon hispidus</name>
    <name type="common">Hispid cotton rat</name>
    <dbReference type="NCBI Taxonomy" id="42415"/>
</organismHost>
<protein>
    <recommendedName>
        <fullName evidence="1">RNA-directed RNA polymerase L</fullName>
        <shortName evidence="1">Protein L</shortName>
        <ecNumber evidence="1">2.7.7.48</ecNumber>
    </recommendedName>
    <alternativeName>
        <fullName evidence="1">Large structural protein</fullName>
    </alternativeName>
    <alternativeName>
        <fullName evidence="1">Replicase</fullName>
    </alternativeName>
    <alternativeName>
        <fullName evidence="1">Transcriptase</fullName>
    </alternativeName>
    <domain>
        <recommendedName>
            <fullName evidence="1">cap-snatching endonuclease</fullName>
            <ecNumber evidence="1">3.1.-.-</ecNumber>
        </recommendedName>
    </domain>
</protein>
<evidence type="ECO:0000255" key="1">
    <source>
        <dbReference type="HAMAP-Rule" id="MF_04086"/>
    </source>
</evidence>
<name>L_TAMVU</name>
<organism>
    <name type="scientific">Tamiami mammarenavirus (isolate Rat/United States/W 10777/1964)</name>
    <name type="common">TAMV</name>
    <dbReference type="NCBI Taxonomy" id="3052329"/>
    <lineage>
        <taxon>Viruses</taxon>
        <taxon>Riboviria</taxon>
        <taxon>Orthornavirae</taxon>
        <taxon>Negarnaviricota</taxon>
        <taxon>Polyploviricotina</taxon>
        <taxon>Ellioviricetes</taxon>
        <taxon>Bunyavirales</taxon>
        <taxon>Arenaviridae</taxon>
        <taxon>Mammarenavirus</taxon>
    </lineage>
</organism>
<reference key="1">
    <citation type="journal article" date="2007" name="Virology">
        <title>Principal host relationships and evolutionary history of the North American arenaviruses.</title>
        <authorList>
            <person name="Cajimat M.N."/>
            <person name="Milazzo M.L."/>
            <person name="Hess B.D."/>
            <person name="Rood M.P."/>
            <person name="Fulhorst C.F."/>
        </authorList>
    </citation>
    <scope>NUCLEOTIDE SEQUENCE [GENOMIC RNA]</scope>
</reference>
<reference key="2">
    <citation type="journal article" date="2008" name="Curr. Opin. Microbiol.">
        <title>Phylogeny of the genus Arenavirus.</title>
        <authorList>
            <person name="Charrel R.N."/>
            <person name="de Lamballerie X."/>
            <person name="Emonet S."/>
        </authorList>
    </citation>
    <scope>NUCLEOTIDE SEQUENCE [GENOMIC RNA]</scope>
</reference>
<reference key="3">
    <citation type="journal article" date="2017" name="Crit. Rev. Microbiol.">
        <title>Bunyaviridae RdRps: structure, motifs, and RNA synthesis machinery.</title>
        <authorList>
            <person name="Amroun A."/>
            <person name="Priet S."/>
            <person name="de Lamballerie X."/>
            <person name="Querat G."/>
        </authorList>
    </citation>
    <scope>REVIEW</scope>
</reference>
<reference key="4">
    <citation type="journal article" date="2020" name="Trends Microbiol.">
        <title>The Cap-Snatching Mechanism of Bunyaviruses.</title>
        <authorList>
            <person name="Olschewski S."/>
            <person name="Cusack S."/>
            <person name="Rosenthal M."/>
        </authorList>
    </citation>
    <scope>REVIEW</scope>
</reference>
<accession>A9JR23</accession>
<accession>B2MW53</accession>
<gene>
    <name evidence="1" type="primary">L</name>
</gene>
<dbReference type="EC" id="2.7.7.48" evidence="1"/>
<dbReference type="EC" id="3.1.-.-" evidence="1"/>
<dbReference type="EMBL" id="AY924393">
    <property type="protein sequence ID" value="AAX99349.1"/>
    <property type="molecule type" value="Genomic_RNA"/>
</dbReference>
<dbReference type="EMBL" id="EU627614">
    <property type="protein sequence ID" value="ACC94304.1"/>
    <property type="molecule type" value="Genomic_RNA"/>
</dbReference>
<dbReference type="RefSeq" id="YP_001911118.1">
    <property type="nucleotide sequence ID" value="NC_010702.1"/>
</dbReference>
<dbReference type="SMR" id="A9JR23"/>
<dbReference type="KEGG" id="vg:6301275"/>
<dbReference type="Proteomes" id="UP000008034">
    <property type="component" value="Genome"/>
</dbReference>
<dbReference type="Proteomes" id="UP000172871">
    <property type="component" value="Genome"/>
</dbReference>
<dbReference type="GO" id="GO:0030430">
    <property type="term" value="C:host cell cytoplasm"/>
    <property type="evidence" value="ECO:0007669"/>
    <property type="project" value="UniProtKB-SubCell"/>
</dbReference>
<dbReference type="GO" id="GO:0044423">
    <property type="term" value="C:virion component"/>
    <property type="evidence" value="ECO:0007669"/>
    <property type="project" value="UniProtKB-KW"/>
</dbReference>
<dbReference type="GO" id="GO:0016787">
    <property type="term" value="F:hydrolase activity"/>
    <property type="evidence" value="ECO:0007669"/>
    <property type="project" value="UniProtKB-KW"/>
</dbReference>
<dbReference type="GO" id="GO:0046872">
    <property type="term" value="F:metal ion binding"/>
    <property type="evidence" value="ECO:0007669"/>
    <property type="project" value="UniProtKB-KW"/>
</dbReference>
<dbReference type="GO" id="GO:0000166">
    <property type="term" value="F:nucleotide binding"/>
    <property type="evidence" value="ECO:0007669"/>
    <property type="project" value="UniProtKB-UniRule"/>
</dbReference>
<dbReference type="GO" id="GO:0003968">
    <property type="term" value="F:RNA-directed RNA polymerase activity"/>
    <property type="evidence" value="ECO:0007669"/>
    <property type="project" value="UniProtKB-UniRule"/>
</dbReference>
<dbReference type="GO" id="GO:0075526">
    <property type="term" value="P:cap snatching"/>
    <property type="evidence" value="ECO:0007669"/>
    <property type="project" value="UniProtKB-UniRule"/>
</dbReference>
<dbReference type="GO" id="GO:0039689">
    <property type="term" value="P:negative stranded viral RNA replication"/>
    <property type="evidence" value="ECO:0000250"/>
    <property type="project" value="UniProtKB"/>
</dbReference>
<dbReference type="GO" id="GO:0039696">
    <property type="term" value="P:RNA-templated viral transcription"/>
    <property type="evidence" value="ECO:0000250"/>
    <property type="project" value="UniProtKB"/>
</dbReference>
<dbReference type="FunFam" id="3.30.70.2640:FF:000001">
    <property type="entry name" value="RNA-directed RNA polymerase L"/>
    <property type="match status" value="1"/>
</dbReference>
<dbReference type="Gene3D" id="3.30.70.2640">
    <property type="entry name" value="Arenavirus RNA polymerase"/>
    <property type="match status" value="1"/>
</dbReference>
<dbReference type="Gene3D" id="1.20.1440.300">
    <property type="entry name" value="RNA-directed RNA polymerase L, helical domain"/>
    <property type="match status" value="1"/>
</dbReference>
<dbReference type="HAMAP" id="MF_04086">
    <property type="entry name" value="ARENA_L"/>
    <property type="match status" value="1"/>
</dbReference>
<dbReference type="InterPro" id="IPR026382">
    <property type="entry name" value="CapSnatch_arenavir"/>
</dbReference>
<dbReference type="InterPro" id="IPR048006">
    <property type="entry name" value="CapSnatch_bunyavir"/>
</dbReference>
<dbReference type="InterPro" id="IPR007099">
    <property type="entry name" value="RNA-dir_pol_NSvirus"/>
</dbReference>
<dbReference type="InterPro" id="IPR010453">
    <property type="entry name" value="RNA_pol_arenavir"/>
</dbReference>
<dbReference type="NCBIfam" id="TIGR04202">
    <property type="entry name" value="capSnatchArena"/>
    <property type="match status" value="1"/>
</dbReference>
<dbReference type="Pfam" id="PF06317">
    <property type="entry name" value="Arena_RNA_pol"/>
    <property type="match status" value="1"/>
</dbReference>
<dbReference type="Pfam" id="PF17296">
    <property type="entry name" value="ArenaCapSnatch"/>
    <property type="match status" value="1"/>
</dbReference>
<dbReference type="PIRSF" id="PIRSF000836">
    <property type="entry name" value="L_ArenaV"/>
    <property type="match status" value="1"/>
</dbReference>
<dbReference type="PROSITE" id="PS50525">
    <property type="entry name" value="RDRP_SSRNA_NEG_SEG"/>
    <property type="match status" value="1"/>
</dbReference>
<proteinExistence type="inferred from homology"/>
<keyword id="KW-1157">Cap snatching</keyword>
<keyword id="KW-1035">Host cytoplasm</keyword>
<keyword id="KW-0378">Hydrolase</keyword>
<keyword id="KW-0460">Magnesium</keyword>
<keyword id="KW-0464">Manganese</keyword>
<keyword id="KW-0479">Metal-binding</keyword>
<keyword id="KW-0547">Nucleotide-binding</keyword>
<keyword id="KW-0548">Nucleotidyltransferase</keyword>
<keyword id="KW-0696">RNA-directed RNA polymerase</keyword>
<keyword id="KW-0808">Transferase</keyword>
<keyword id="KW-0693">Viral RNA replication</keyword>
<keyword id="KW-0946">Virion</keyword>
<feature type="chain" id="PRO_0000361647" description="RNA-directed RNA polymerase L">
    <location>
        <begin position="1"/>
        <end position="2221"/>
    </location>
</feature>
<feature type="domain" description="RdRp catalytic" evidence="1">
    <location>
        <begin position="1171"/>
        <end position="1369"/>
    </location>
</feature>
<feature type="region of interest" description="Endonuclease" evidence="1">
    <location>
        <begin position="29"/>
        <end position="292"/>
    </location>
</feature>
<feature type="active site" evidence="1">
    <location>
        <position position="117"/>
    </location>
</feature>
<feature type="binding site" evidence="1">
    <location>
        <position position="54"/>
    </location>
    <ligand>
        <name>Mn(2+)</name>
        <dbReference type="ChEBI" id="CHEBI:29035"/>
        <label>1</label>
    </ligand>
</feature>
<feature type="binding site" evidence="1">
    <location>
        <position position="91"/>
    </location>
    <ligand>
        <name>Mn(2+)</name>
        <dbReference type="ChEBI" id="CHEBI:29035"/>
        <label>1</label>
    </ligand>
</feature>
<feature type="binding site" evidence="1">
    <location>
        <position position="91"/>
    </location>
    <ligand>
        <name>Mn(2+)</name>
        <dbReference type="ChEBI" id="CHEBI:29035"/>
        <label>2</label>
    </ligand>
</feature>
<feature type="binding site" evidence="1">
    <location>
        <position position="104"/>
    </location>
    <ligand>
        <name>Mn(2+)</name>
        <dbReference type="ChEBI" id="CHEBI:29035"/>
        <label>1</label>
    </ligand>
</feature>
<feature type="binding site" evidence="1">
    <location>
        <position position="1327"/>
    </location>
    <ligand>
        <name>Mg(2+)</name>
        <dbReference type="ChEBI" id="CHEBI:18420"/>
        <note>catalytic; for RdRp activity</note>
    </ligand>
</feature>
<feature type="sequence variant">
    <original>K</original>
    <variation>R</variation>
    <location>
        <position position="402"/>
    </location>
</feature>
<feature type="sequence variant">
    <original>R</original>
    <variation>G</variation>
    <location>
        <position position="549"/>
    </location>
</feature>
<feature type="sequence variant">
    <original>LM</original>
    <variation>KV</variation>
    <location>
        <begin position="555"/>
        <end position="556"/>
    </location>
</feature>
<comment type="function">
    <text evidence="1">RNA-dependent RNA polymerase, which is responsible for the replication and transcription of the viral RNA genome using antigenomic RNA as an intermediate. During transcription, synthesizes subgenomic RNAs and assures their capping by a cap-snatching mechanism, which involves the endonuclease activity cleaving the host capped pre-mRNAs. These short capped RNAs are then used as primers for viral transcription. The 3'-end of subgenomic mRNAs molecules are heterogeneous and not polyadenylated. The replicase function is to direct synthesis of antigenomic and genomic RNA which are encapsidated and non capped. As a consequence of the use of the same enzyme for both transcription and replication, these mechanisms need to be well coordinated. These processes may be regulated by proteins N and Z in a dose-dependent manner. Z protein inhibits the viral polymerase L und thus the viral transcription and RNA synthesis.</text>
</comment>
<comment type="catalytic activity">
    <reaction evidence="1">
        <text>RNA(n) + a ribonucleoside 5'-triphosphate = RNA(n+1) + diphosphate</text>
        <dbReference type="Rhea" id="RHEA:21248"/>
        <dbReference type="Rhea" id="RHEA-COMP:14527"/>
        <dbReference type="Rhea" id="RHEA-COMP:17342"/>
        <dbReference type="ChEBI" id="CHEBI:33019"/>
        <dbReference type="ChEBI" id="CHEBI:61557"/>
        <dbReference type="ChEBI" id="CHEBI:140395"/>
        <dbReference type="EC" id="2.7.7.48"/>
    </reaction>
</comment>
<comment type="cofactor">
    <cofactor evidence="1">
        <name>Mn(2+)</name>
        <dbReference type="ChEBI" id="CHEBI:29035"/>
    </cofactor>
    <text evidence="1">For endonuclease activity. Binds 2 Mn(2+) ions in the active site. The divalent metal ions are crucial for catalytic activity.</text>
</comment>
<comment type="cofactor">
    <cofactor evidence="1">
        <name>Mg(2+)</name>
        <dbReference type="ChEBI" id="CHEBI:18420"/>
    </cofactor>
    <cofactor evidence="1">
        <name>Mn(2+)</name>
        <dbReference type="ChEBI" id="CHEBI:29035"/>
    </cofactor>
    <text evidence="1">For polymerase activity.</text>
</comment>
<comment type="subunit">
    <text evidence="1">Homomultimer; the oligomeric structure is essential for the polymerase activity. Interacts with nucleoprotein N. Interacts with protein Z; this interaction inhibits viral transcription and replication, Z partially blocks the product exit tunnel for the releasing nascent RNA product.</text>
</comment>
<comment type="subcellular location">
    <subcellularLocation>
        <location evidence="1">Virion</location>
    </subcellularLocation>
    <subcellularLocation>
        <location evidence="1">Host cytoplasm</location>
    </subcellularLocation>
</comment>
<comment type="domain">
    <text evidence="1">The N-terminus contains the endonuclease activity (endoN). The central region contains the RdRp activity.</text>
</comment>
<comment type="miscellaneous">
    <text evidence="1">Classified as His(-) endonuclease since it does not have a histidine upstream of the active site that coordinates the first cation. His(-) endonucleases display very low activity in vitro, although they are clearly active in vivo.</text>
</comment>
<comment type="similarity">
    <text evidence="1">Belongs to the Bunyavirales RNA polymerase family.</text>
</comment>
<sequence>MSECLTYFNELKDLVRKWVPDEDTYVEQKTVLLSQVNFSSIVTEGLKLLSTLIEVDSCVKHGCIHNRSKTVNQILYDHRIVGPTLPDVVPDGYRVSGSTLILLETFVRVNQESFECKYRHDFEKLMQLSKDLAKCGLTLVPVIDGRSSYYIERLPDWVIERMRWLLLRIMSNLRDSGEKIEEMEYERLVHSLSNMENQNLGLESLASLREEGLDYKTRLTKTLKEGIYSNMTTSECRVGIAKLYDHFCLLRDSGQYEDVYTTTSRSEMITWLKTHELVQMSSSERETLIEAETCKFCQIHMYAVLKDLVLLRKGWKGSRCRDANEILAHKSLLSDCNKIKGLKVLNTRRNTLLCLDIIVLNSLINLIKLQYTDLQYLINNHFKSVNDRLVSVDLIINKLDKKLTSDPNWLCKLRTKIGHKLKIYDLDHVISWLRPIEVSHWYEFKLERDNSGECVKPTIKYKKSGVGDCQGEDCNKDVITDDSTFSDYLDALSTLSMGLMNSMKTSSATKLVVNDERNYFGTVQCDECYFQDLDINYGTTLIYQKTGERTRCYGLMSKEGGGPDVYKVGKSFYADPKRYFLPIMSSEVILKMCREMLSWLDWLSEKEMMDVRTKLYTLVISILTVPSKRVQIYLQGFRYFIMAYVNEFHVKELVCKLKVKPLTRAELSVFTQMDDLVALLLTGTSEEHMTKSFKFILNLSYLCHLITKETPDRLTDQIKCFEKFLEPKLTFNSVILNLDSSPQLTEGTEEKIIGDLKKLFSKDLGVLDLKEPGVSKEVLSLCSSCFNNGMLSLPKVLSRDPQSPSFTSTALDISSNKSVVVPKLNEVGETITQYDYQSLLSSVVVEMAQSFKDKLRFKLDRRSLQYAIYKRLTNMVSKNEFRSKDDPNDSGILEDIEDLVDEGTHKLINEIEANVSDCLSKMSSGCNKSNQSSKGLKKFEKVDLLQKLWSREYMSLILSETSFHEVKDFDPSLLPSESYQEMCDAVYDSVYRNEFFTEKFLKLCPLELLIKNLATKHYEEGDYFECFKYLLIGAGCDNRVGRFDHRSRARLGFKDTATLVKEESRISSRESNSEAISKRLDKSFFTNSSLRNLCFYSEESPTYRSSVSSSVGKLKFGLSYKEQVGSNRELYIGDLNTKLTSRLIEDYFESLTSECRFSCLNNDSEFERALLDMKSVVRLSGLAVSLDHSKWGPYMSPAIFNALFSNLDLQLKDGGLIDKSPIENLLNWHLHKIVEVPYNVVEAYLKGYTKRSLGLMDRSSSSMTEDYFFRQFAKGVVPSHITSVLDMGQGILHNASDYYGLLTEQFITLCLELCFDVKMTAYTSSDDEIMLSNSYSLKRESDDDLLDMEKCKEILEFHYYLSSKLNKFISPKTVAGSFASEFKSRFFIWSQEVPLLTKFVAAALHNVKAKSPHQLAETIDTILDQCAANGVSIEIINELSKRTNRLISYSGHPVDPFLCVFTTDLKDWVDGSRGYRLQRSIESIINSEEILSTIRDSCRQLFYMIRSGRIQEEYLISALQSSPDDCLRQMLKITGTNDSLIEEALTTRWLNLRAFGDLRLVLRTKIMTGTRILDKEEVPSLIKSVQSKLSKNFVRGAKKIITDAINKSAFQSSICSGFIGLCKSMGSKCVRDGSGGFIYIKDLLKKIDRHTNCEVCCPLLSVFCEHSLRQVAPYSRPLLWDYFSLTFSNACELGNWVFSKVELPRPPLGSMNPNFFWPVKPGSHSELEDKVNMNHVLYSIKRNFPDLFDEHIAPFLSDLNSLKVSWVQRIKFLDLCVAMDMSSECLGIISHIMRKRREELYIVKQEELSVCHIRESCSLEKGLQLNSVEICQNFLTQLLFESMLNPVLLSTSQFKKYFWYGEVEFLPNDADHDLGQLTQFIMDCKLLNISRCMCLDDLDVGYVHSKIELSQVFINLSTFINLVDWENRESYQSFDEVLIHSNADHIPLEIGIILSHTRKSFKFRYERKTNYYVKCGITIQKSEISSFSTTLSDGFELHVEEIDCYVSGSEGDHISLDGVGLVPLHPLFSGKEALDLNKLLSDQDIEFKQISLVFSKVKLDFKDHVKDLKNKFSYKLQGPEQGLEPLHLDKGQIMERNTVVSRLEVPVTSRSLFLALEALDPGNRPRFLSSLHEYMRKRPGKKDPCFVRMTQQDLCLLVELYEAAFMQVLSAVSDWIEFGCFALCFSKTLNCIMIADDGGDYRLKGRPCKTLSAQKTLTDIE</sequence>